<dbReference type="EMBL" id="AE004439">
    <property type="protein sequence ID" value="AAK03475.1"/>
    <property type="molecule type" value="Genomic_DNA"/>
</dbReference>
<dbReference type="RefSeq" id="WP_005717911.1">
    <property type="nucleotide sequence ID" value="NC_002663.1"/>
</dbReference>
<dbReference type="SMR" id="Q9CL53"/>
<dbReference type="STRING" id="272843.PM1391"/>
<dbReference type="EnsemblBacteria" id="AAK03475">
    <property type="protein sequence ID" value="AAK03475"/>
    <property type="gene ID" value="PM1391"/>
</dbReference>
<dbReference type="GeneID" id="77207050"/>
<dbReference type="KEGG" id="pmu:PM1391"/>
<dbReference type="HOGENOM" id="CLU_092403_0_2_6"/>
<dbReference type="OrthoDB" id="9803672at2"/>
<dbReference type="Proteomes" id="UP000000809">
    <property type="component" value="Chromosome"/>
</dbReference>
<dbReference type="GO" id="GO:0015935">
    <property type="term" value="C:small ribosomal subunit"/>
    <property type="evidence" value="ECO:0007669"/>
    <property type="project" value="InterPro"/>
</dbReference>
<dbReference type="GO" id="GO:0019843">
    <property type="term" value="F:rRNA binding"/>
    <property type="evidence" value="ECO:0007669"/>
    <property type="project" value="UniProtKB-UniRule"/>
</dbReference>
<dbReference type="GO" id="GO:0003735">
    <property type="term" value="F:structural constituent of ribosome"/>
    <property type="evidence" value="ECO:0007669"/>
    <property type="project" value="InterPro"/>
</dbReference>
<dbReference type="GO" id="GO:0042274">
    <property type="term" value="P:ribosomal small subunit biogenesis"/>
    <property type="evidence" value="ECO:0007669"/>
    <property type="project" value="TreeGrafter"/>
</dbReference>
<dbReference type="GO" id="GO:0006412">
    <property type="term" value="P:translation"/>
    <property type="evidence" value="ECO:0007669"/>
    <property type="project" value="UniProtKB-UniRule"/>
</dbReference>
<dbReference type="CDD" id="cd00165">
    <property type="entry name" value="S4"/>
    <property type="match status" value="1"/>
</dbReference>
<dbReference type="FunFam" id="1.10.1050.10:FF:000001">
    <property type="entry name" value="30S ribosomal protein S4"/>
    <property type="match status" value="1"/>
</dbReference>
<dbReference type="FunFam" id="3.10.290.10:FF:000001">
    <property type="entry name" value="30S ribosomal protein S4"/>
    <property type="match status" value="1"/>
</dbReference>
<dbReference type="Gene3D" id="1.10.1050.10">
    <property type="entry name" value="Ribosomal Protein S4 Delta 41, Chain A, domain 1"/>
    <property type="match status" value="1"/>
</dbReference>
<dbReference type="Gene3D" id="3.10.290.10">
    <property type="entry name" value="RNA-binding S4 domain"/>
    <property type="match status" value="1"/>
</dbReference>
<dbReference type="HAMAP" id="MF_01306_B">
    <property type="entry name" value="Ribosomal_uS4_B"/>
    <property type="match status" value="1"/>
</dbReference>
<dbReference type="InterPro" id="IPR022801">
    <property type="entry name" value="Ribosomal_uS4"/>
</dbReference>
<dbReference type="InterPro" id="IPR005709">
    <property type="entry name" value="Ribosomal_uS4_bac-type"/>
</dbReference>
<dbReference type="InterPro" id="IPR018079">
    <property type="entry name" value="Ribosomal_uS4_CS"/>
</dbReference>
<dbReference type="InterPro" id="IPR001912">
    <property type="entry name" value="Ribosomal_uS4_N"/>
</dbReference>
<dbReference type="InterPro" id="IPR002942">
    <property type="entry name" value="S4_RNA-bd"/>
</dbReference>
<dbReference type="InterPro" id="IPR036986">
    <property type="entry name" value="S4_RNA-bd_sf"/>
</dbReference>
<dbReference type="NCBIfam" id="NF003717">
    <property type="entry name" value="PRK05327.1"/>
    <property type="match status" value="1"/>
</dbReference>
<dbReference type="NCBIfam" id="TIGR01017">
    <property type="entry name" value="rpsD_bact"/>
    <property type="match status" value="1"/>
</dbReference>
<dbReference type="PANTHER" id="PTHR11831">
    <property type="entry name" value="30S 40S RIBOSOMAL PROTEIN"/>
    <property type="match status" value="1"/>
</dbReference>
<dbReference type="PANTHER" id="PTHR11831:SF4">
    <property type="entry name" value="SMALL RIBOSOMAL SUBUNIT PROTEIN US4M"/>
    <property type="match status" value="1"/>
</dbReference>
<dbReference type="Pfam" id="PF00163">
    <property type="entry name" value="Ribosomal_S4"/>
    <property type="match status" value="1"/>
</dbReference>
<dbReference type="Pfam" id="PF01479">
    <property type="entry name" value="S4"/>
    <property type="match status" value="1"/>
</dbReference>
<dbReference type="SMART" id="SM01390">
    <property type="entry name" value="Ribosomal_S4"/>
    <property type="match status" value="1"/>
</dbReference>
<dbReference type="SMART" id="SM00363">
    <property type="entry name" value="S4"/>
    <property type="match status" value="1"/>
</dbReference>
<dbReference type="SUPFAM" id="SSF55174">
    <property type="entry name" value="Alpha-L RNA-binding motif"/>
    <property type="match status" value="1"/>
</dbReference>
<dbReference type="PROSITE" id="PS00632">
    <property type="entry name" value="RIBOSOMAL_S4"/>
    <property type="match status" value="1"/>
</dbReference>
<dbReference type="PROSITE" id="PS50889">
    <property type="entry name" value="S4"/>
    <property type="match status" value="1"/>
</dbReference>
<reference key="1">
    <citation type="journal article" date="2001" name="Proc. Natl. Acad. Sci. U.S.A.">
        <title>Complete genomic sequence of Pasteurella multocida Pm70.</title>
        <authorList>
            <person name="May B.J."/>
            <person name="Zhang Q."/>
            <person name="Li L.L."/>
            <person name="Paustian M.L."/>
            <person name="Whittam T.S."/>
            <person name="Kapur V."/>
        </authorList>
    </citation>
    <scope>NUCLEOTIDE SEQUENCE [LARGE SCALE GENOMIC DNA]</scope>
    <source>
        <strain>Pm70</strain>
    </source>
</reference>
<organism>
    <name type="scientific">Pasteurella multocida (strain Pm70)</name>
    <dbReference type="NCBI Taxonomy" id="272843"/>
    <lineage>
        <taxon>Bacteria</taxon>
        <taxon>Pseudomonadati</taxon>
        <taxon>Pseudomonadota</taxon>
        <taxon>Gammaproteobacteria</taxon>
        <taxon>Pasteurellales</taxon>
        <taxon>Pasteurellaceae</taxon>
        <taxon>Pasteurella</taxon>
    </lineage>
</organism>
<gene>
    <name evidence="1" type="primary">rpsD</name>
    <name evidence="1" type="synonym">rps4</name>
    <name type="ordered locus">PM1391</name>
</gene>
<feature type="chain" id="PRO_0000132430" description="Small ribosomal subunit protein uS4">
    <location>
        <begin position="1"/>
        <end position="206"/>
    </location>
</feature>
<feature type="domain" description="S4 RNA-binding" evidence="1">
    <location>
        <begin position="96"/>
        <end position="156"/>
    </location>
</feature>
<comment type="function">
    <text evidence="1">One of the primary rRNA binding proteins, it binds directly to 16S rRNA where it nucleates assembly of the body of the 30S subunit.</text>
</comment>
<comment type="function">
    <text evidence="1">With S5 and S12 plays an important role in translational accuracy.</text>
</comment>
<comment type="subunit">
    <text evidence="1">Part of the 30S ribosomal subunit. Contacts protein S5. The interaction surface between S4 and S5 is involved in control of translational fidelity.</text>
</comment>
<comment type="similarity">
    <text evidence="1">Belongs to the universal ribosomal protein uS4 family.</text>
</comment>
<keyword id="KW-1185">Reference proteome</keyword>
<keyword id="KW-0687">Ribonucleoprotein</keyword>
<keyword id="KW-0689">Ribosomal protein</keyword>
<keyword id="KW-0694">RNA-binding</keyword>
<keyword id="KW-0699">rRNA-binding</keyword>
<proteinExistence type="inferred from homology"/>
<name>RS4_PASMU</name>
<evidence type="ECO:0000255" key="1">
    <source>
        <dbReference type="HAMAP-Rule" id="MF_01306"/>
    </source>
</evidence>
<evidence type="ECO:0000305" key="2"/>
<accession>Q9CL53</accession>
<sequence length="206" mass="23478">MARYLGPKLKLSRREGTDLFLKSGVRAIESKCKIDTAPGQHGARKPRLSDYGSQLREKQKVRRIYGILERQFRNYYKEANRLKGNTGENLLVLLEGRLDNVVYRMGFAATRAEARQLVSHKAIVVNGRVVNIPSFQVSVNDVVAVREKSKKQARIKASLELAEQREKPTWLEVDAAKMEGVFKRVPERSDLSADINEHLIVELYSK</sequence>
<protein>
    <recommendedName>
        <fullName evidence="1">Small ribosomal subunit protein uS4</fullName>
    </recommendedName>
    <alternativeName>
        <fullName evidence="2">30S ribosomal protein S4</fullName>
    </alternativeName>
</protein>